<reference key="1">
    <citation type="journal article" date="2005" name="Nature">
        <title>The genome of the social amoeba Dictyostelium discoideum.</title>
        <authorList>
            <person name="Eichinger L."/>
            <person name="Pachebat J.A."/>
            <person name="Gloeckner G."/>
            <person name="Rajandream M.A."/>
            <person name="Sucgang R."/>
            <person name="Berriman M."/>
            <person name="Song J."/>
            <person name="Olsen R."/>
            <person name="Szafranski K."/>
            <person name="Xu Q."/>
            <person name="Tunggal B."/>
            <person name="Kummerfeld S."/>
            <person name="Madera M."/>
            <person name="Konfortov B.A."/>
            <person name="Rivero F."/>
            <person name="Bankier A.T."/>
            <person name="Lehmann R."/>
            <person name="Hamlin N."/>
            <person name="Davies R."/>
            <person name="Gaudet P."/>
            <person name="Fey P."/>
            <person name="Pilcher K."/>
            <person name="Chen G."/>
            <person name="Saunders D."/>
            <person name="Sodergren E.J."/>
            <person name="Davis P."/>
            <person name="Kerhornou A."/>
            <person name="Nie X."/>
            <person name="Hall N."/>
            <person name="Anjard C."/>
            <person name="Hemphill L."/>
            <person name="Bason N."/>
            <person name="Farbrother P."/>
            <person name="Desany B."/>
            <person name="Just E."/>
            <person name="Morio T."/>
            <person name="Rost R."/>
            <person name="Churcher C.M."/>
            <person name="Cooper J."/>
            <person name="Haydock S."/>
            <person name="van Driessche N."/>
            <person name="Cronin A."/>
            <person name="Goodhead I."/>
            <person name="Muzny D.M."/>
            <person name="Mourier T."/>
            <person name="Pain A."/>
            <person name="Lu M."/>
            <person name="Harper D."/>
            <person name="Lindsay R."/>
            <person name="Hauser H."/>
            <person name="James K.D."/>
            <person name="Quiles M."/>
            <person name="Madan Babu M."/>
            <person name="Saito T."/>
            <person name="Buchrieser C."/>
            <person name="Wardroper A."/>
            <person name="Felder M."/>
            <person name="Thangavelu M."/>
            <person name="Johnson D."/>
            <person name="Knights A."/>
            <person name="Loulseged H."/>
            <person name="Mungall K.L."/>
            <person name="Oliver K."/>
            <person name="Price C."/>
            <person name="Quail M.A."/>
            <person name="Urushihara H."/>
            <person name="Hernandez J."/>
            <person name="Rabbinowitsch E."/>
            <person name="Steffen D."/>
            <person name="Sanders M."/>
            <person name="Ma J."/>
            <person name="Kohara Y."/>
            <person name="Sharp S."/>
            <person name="Simmonds M.N."/>
            <person name="Spiegler S."/>
            <person name="Tivey A."/>
            <person name="Sugano S."/>
            <person name="White B."/>
            <person name="Walker D."/>
            <person name="Woodward J.R."/>
            <person name="Winckler T."/>
            <person name="Tanaka Y."/>
            <person name="Shaulsky G."/>
            <person name="Schleicher M."/>
            <person name="Weinstock G.M."/>
            <person name="Rosenthal A."/>
            <person name="Cox E.C."/>
            <person name="Chisholm R.L."/>
            <person name="Gibbs R.A."/>
            <person name="Loomis W.F."/>
            <person name="Platzer M."/>
            <person name="Kay R.R."/>
            <person name="Williams J.G."/>
            <person name="Dear P.H."/>
            <person name="Noegel A.A."/>
            <person name="Barrell B.G."/>
            <person name="Kuspa A."/>
        </authorList>
    </citation>
    <scope>NUCLEOTIDE SEQUENCE [LARGE SCALE GENOMIC DNA]</scope>
    <source>
        <strain>AX4</strain>
    </source>
</reference>
<sequence>MGQQLAHNAYQIHSFASDSRLYNLVINIDTQPTTLFDGQTTPITS</sequence>
<keyword id="KW-1185">Reference proteome</keyword>
<dbReference type="EMBL" id="AAFI02000003">
    <property type="protein sequence ID" value="EAL73476.1"/>
    <property type="molecule type" value="Genomic_DNA"/>
</dbReference>
<dbReference type="RefSeq" id="XP_647512.1">
    <property type="nucleotide sequence ID" value="XM_642420.1"/>
</dbReference>
<dbReference type="PaxDb" id="44689-DDB0189737"/>
<dbReference type="EnsemblProtists" id="EAL73476">
    <property type="protein sequence ID" value="EAL73476"/>
    <property type="gene ID" value="DDB_G0268046"/>
</dbReference>
<dbReference type="GeneID" id="8616319"/>
<dbReference type="KEGG" id="ddi:DDB_G0268046"/>
<dbReference type="dictyBase" id="DDB_G0268046"/>
<dbReference type="VEuPathDB" id="AmoebaDB:DDB_G0268046"/>
<dbReference type="HOGENOM" id="CLU_3208720_0_0_1"/>
<dbReference type="InParanoid" id="Q55FM1"/>
<dbReference type="Proteomes" id="UP000002195">
    <property type="component" value="Chromosome 1"/>
</dbReference>
<comment type="caution">
    <text evidence="1">Product of a dubious gene prediction.</text>
</comment>
<feature type="chain" id="PRO_0000348209" description="Putative uncharacterized protein DDB_G0268046">
    <location>
        <begin position="1"/>
        <end position="45"/>
    </location>
</feature>
<protein>
    <recommendedName>
        <fullName>Putative uncharacterized protein DDB_G0268046</fullName>
    </recommendedName>
</protein>
<gene>
    <name type="ORF">DDB_G0268046</name>
</gene>
<evidence type="ECO:0000305" key="1"/>
<organism>
    <name type="scientific">Dictyostelium discoideum</name>
    <name type="common">Social amoeba</name>
    <dbReference type="NCBI Taxonomy" id="44689"/>
    <lineage>
        <taxon>Eukaryota</taxon>
        <taxon>Amoebozoa</taxon>
        <taxon>Evosea</taxon>
        <taxon>Eumycetozoa</taxon>
        <taxon>Dictyostelia</taxon>
        <taxon>Dictyosteliales</taxon>
        <taxon>Dictyosteliaceae</taxon>
        <taxon>Dictyostelium</taxon>
    </lineage>
</organism>
<accession>Q55FM1</accession>
<proteinExistence type="uncertain"/>
<name>Y9737_DICDI</name>